<reference key="1">
    <citation type="journal article" date="2000" name="Nature">
        <title>The complete sequence of the mucosal pathogen Ureaplasma urealyticum.</title>
        <authorList>
            <person name="Glass J.I."/>
            <person name="Lefkowitz E.J."/>
            <person name="Glass J.S."/>
            <person name="Heiner C.R."/>
            <person name="Chen E.Y."/>
            <person name="Cassell G.H."/>
        </authorList>
    </citation>
    <scope>NUCLEOTIDE SEQUENCE [LARGE SCALE GENOMIC DNA]</scope>
    <source>
        <strain>ATCC 700970</strain>
    </source>
</reference>
<organism>
    <name type="scientific">Ureaplasma parvum serovar 3 (strain ATCC 700970)</name>
    <dbReference type="NCBI Taxonomy" id="273119"/>
    <lineage>
        <taxon>Bacteria</taxon>
        <taxon>Bacillati</taxon>
        <taxon>Mycoplasmatota</taxon>
        <taxon>Mycoplasmoidales</taxon>
        <taxon>Mycoplasmoidaceae</taxon>
        <taxon>Ureaplasma</taxon>
    </lineage>
</organism>
<accession>Q9PQX0</accession>
<evidence type="ECO:0000305" key="1"/>
<protein>
    <recommendedName>
        <fullName>Uncharacterized protein UU173</fullName>
    </recommendedName>
</protein>
<gene>
    <name type="ordered locus">UU173</name>
</gene>
<keyword id="KW-1185">Reference proteome</keyword>
<feature type="chain" id="PRO_0000210569" description="Uncharacterized protein UU173">
    <location>
        <begin position="1"/>
        <end position="690"/>
    </location>
</feature>
<name>Y173_UREPA</name>
<comment type="similarity">
    <text evidence="1">To M.genitalium MG366 and M.pneumoniae MPN544.</text>
</comment>
<dbReference type="EMBL" id="AF222894">
    <property type="protein sequence ID" value="AAF30580.1"/>
    <property type="molecule type" value="Genomic_DNA"/>
</dbReference>
<dbReference type="RefSeq" id="WP_006688829.1">
    <property type="nucleotide sequence ID" value="NC_002162.1"/>
</dbReference>
<dbReference type="STRING" id="273119.UU173"/>
<dbReference type="EnsemblBacteria" id="AAF30580">
    <property type="protein sequence ID" value="AAF30580"/>
    <property type="gene ID" value="UU173"/>
</dbReference>
<dbReference type="GeneID" id="29672736"/>
<dbReference type="KEGG" id="uur:UU173"/>
<dbReference type="eggNOG" id="COG2251">
    <property type="taxonomic scope" value="Bacteria"/>
</dbReference>
<dbReference type="HOGENOM" id="CLU_402679_0_0_14"/>
<dbReference type="OrthoDB" id="9783873at2"/>
<dbReference type="Proteomes" id="UP000000423">
    <property type="component" value="Chromosome"/>
</dbReference>
<dbReference type="InterPro" id="IPR021301">
    <property type="entry name" value="DUF2779"/>
</dbReference>
<dbReference type="NCBIfam" id="NF045869">
    <property type="entry name" value="UU173_fam"/>
    <property type="match status" value="1"/>
</dbReference>
<dbReference type="Pfam" id="PF11074">
    <property type="entry name" value="DUF2779"/>
    <property type="match status" value="1"/>
</dbReference>
<sequence length="690" mass="81367">MRTGKYITKYDYIGYYTKQKAMWFFTNAEIKAKIDLLLKNVSSYDFEDLDDEEEHDYEIDAYEIYKEQTDFLSQLEINKNIDVDNPKIAEGILLDKASQEDIKKTYHYIKKIINFETDPLFKNKSLEELANLTLELIDKNDKIIFFQPVFINDKLITKPDCFIKKNDEFIVIETKGTSSIKKHHILDVFYQAQVISKHPYFINKCISYQMCIVDYVKLKKNQVNFTISPYYNYQKSVVLSLPPSAANQFNKFEINELKRKRKRGEAIYLKKDENKKYYEDIDAYDHCKGILIDDLIDGTYSSINDYKEAKKIYDYKTEDLKDDVRFNKTMDELIKGIEKLHNDFDEVISELLVHKQNLLALPIEQRIPNYFIPSYNDKGDYKDNDFWLELRNLYAYSGYDVIKYSGKILTIKKFGLDNVTKDILGIDILKTYANQTFFNLYKNNQIKIYQAAVDLFAKLKSKKVYFDFESINSAIRAVDNSFPFTQTVTQNSIIIDDGSCDIKNLKCTNMIIDPREINNEWFKAIIDKIHQGLEYSYIVYNKSFEASRLKEMAEFINEEIYELKVSEIIKNMYDLADFFIVSMGKQLIVIPELKGFYSIKKVLPIIEKEFPQIYHDVNCLNYKELSVGNGLVCQTKTTKRFFNTITDLEWEQFVHDARIYCENDVRAMIAVEYFIKKLIDEAKMKNLILS</sequence>
<proteinExistence type="predicted"/>